<gene>
    <name type="primary">tmk</name>
    <name type="ordered locus">CPn_0273</name>
    <name type="ordered locus">CP_0486</name>
    <name type="ordered locus">CpB0280</name>
</gene>
<reference key="1">
    <citation type="journal article" date="1999" name="Nat. Genet.">
        <title>Comparative genomes of Chlamydia pneumoniae and C. trachomatis.</title>
        <authorList>
            <person name="Kalman S."/>
            <person name="Mitchell W.P."/>
            <person name="Marathe R."/>
            <person name="Lammel C.J."/>
            <person name="Fan J."/>
            <person name="Hyman R.W."/>
            <person name="Olinger L."/>
            <person name="Grimwood J."/>
            <person name="Davis R.W."/>
            <person name="Stephens R.S."/>
        </authorList>
    </citation>
    <scope>NUCLEOTIDE SEQUENCE [LARGE SCALE GENOMIC DNA]</scope>
    <source>
        <strain>CWL029</strain>
    </source>
</reference>
<reference key="2">
    <citation type="journal article" date="2000" name="Nucleic Acids Res.">
        <title>Genome sequences of Chlamydia trachomatis MoPn and Chlamydia pneumoniae AR39.</title>
        <authorList>
            <person name="Read T.D."/>
            <person name="Brunham R.C."/>
            <person name="Shen C."/>
            <person name="Gill S.R."/>
            <person name="Heidelberg J.F."/>
            <person name="White O."/>
            <person name="Hickey E.K."/>
            <person name="Peterson J.D."/>
            <person name="Utterback T.R."/>
            <person name="Berry K.J."/>
            <person name="Bass S."/>
            <person name="Linher K.D."/>
            <person name="Weidman J.F."/>
            <person name="Khouri H.M."/>
            <person name="Craven B."/>
            <person name="Bowman C."/>
            <person name="Dodson R.J."/>
            <person name="Gwinn M.L."/>
            <person name="Nelson W.C."/>
            <person name="DeBoy R.T."/>
            <person name="Kolonay J.F."/>
            <person name="McClarty G."/>
            <person name="Salzberg S.L."/>
            <person name="Eisen J.A."/>
            <person name="Fraser C.M."/>
        </authorList>
    </citation>
    <scope>NUCLEOTIDE SEQUENCE [LARGE SCALE GENOMIC DNA]</scope>
    <source>
        <strain>AR39</strain>
    </source>
</reference>
<reference key="3">
    <citation type="journal article" date="2000" name="Nucleic Acids Res.">
        <title>Comparison of whole genome sequences of Chlamydia pneumoniae J138 from Japan and CWL029 from USA.</title>
        <authorList>
            <person name="Shirai M."/>
            <person name="Hirakawa H."/>
            <person name="Kimoto M."/>
            <person name="Tabuchi M."/>
            <person name="Kishi F."/>
            <person name="Ouchi K."/>
            <person name="Shiba T."/>
            <person name="Ishii K."/>
            <person name="Hattori M."/>
            <person name="Kuhara S."/>
            <person name="Nakazawa T."/>
        </authorList>
    </citation>
    <scope>NUCLEOTIDE SEQUENCE [LARGE SCALE GENOMIC DNA]</scope>
    <source>
        <strain>J138</strain>
    </source>
</reference>
<reference key="4">
    <citation type="submission" date="2002-05" db="EMBL/GenBank/DDBJ databases">
        <title>The genome sequence of Chlamydia pneumoniae TW183 and comparison with other Chlamydia strains based on whole genome sequence analysis.</title>
        <authorList>
            <person name="Geng M.M."/>
            <person name="Schuhmacher A."/>
            <person name="Muehldorfer I."/>
            <person name="Bensch K.W."/>
            <person name="Schaefer K.P."/>
            <person name="Schneider S."/>
            <person name="Pohl T."/>
            <person name="Essig A."/>
            <person name="Marre R."/>
            <person name="Melchers K."/>
        </authorList>
    </citation>
    <scope>NUCLEOTIDE SEQUENCE [LARGE SCALE GENOMIC DNA]</scope>
    <source>
        <strain>TW-183</strain>
    </source>
</reference>
<organism>
    <name type="scientific">Chlamydia pneumoniae</name>
    <name type="common">Chlamydophila pneumoniae</name>
    <dbReference type="NCBI Taxonomy" id="83558"/>
    <lineage>
        <taxon>Bacteria</taxon>
        <taxon>Pseudomonadati</taxon>
        <taxon>Chlamydiota</taxon>
        <taxon>Chlamydiia</taxon>
        <taxon>Chlamydiales</taxon>
        <taxon>Chlamydiaceae</taxon>
        <taxon>Chlamydia/Chlamydophila group</taxon>
        <taxon>Chlamydia</taxon>
    </lineage>
</organism>
<proteinExistence type="inferred from homology"/>
<name>KTHY_CHLPN</name>
<comment type="function">
    <text evidence="1">Phosphorylation of dTMP to form dTDP in both de novo and salvage pathways of dTTP synthesis.</text>
</comment>
<comment type="catalytic activity">
    <reaction>
        <text>dTMP + ATP = dTDP + ADP</text>
        <dbReference type="Rhea" id="RHEA:13517"/>
        <dbReference type="ChEBI" id="CHEBI:30616"/>
        <dbReference type="ChEBI" id="CHEBI:58369"/>
        <dbReference type="ChEBI" id="CHEBI:63528"/>
        <dbReference type="ChEBI" id="CHEBI:456216"/>
        <dbReference type="EC" id="2.7.4.9"/>
    </reaction>
</comment>
<comment type="similarity">
    <text evidence="3">Belongs to the thymidylate kinase family.</text>
</comment>
<evidence type="ECO:0000250" key="1"/>
<evidence type="ECO:0000255" key="2"/>
<evidence type="ECO:0000305" key="3"/>
<feature type="chain" id="PRO_0000155261" description="Thymidylate kinase">
    <location>
        <begin position="1"/>
        <end position="206"/>
    </location>
</feature>
<feature type="binding site" evidence="2">
    <location>
        <begin position="7"/>
        <end position="14"/>
    </location>
    <ligand>
        <name>ATP</name>
        <dbReference type="ChEBI" id="CHEBI:30616"/>
    </ligand>
</feature>
<sequence>MFIVIEGGEGSGKSSLAKALGDQLVAQDRKVLLTREPGGCLIGERLRDLILEPPHLELSRCCELFLFLGSRAQHIQEVIIPALRDGYIVICERFHDSTIVYQGIAEGLGADFVADLCSKVVGPTPFLPNFVLLLDIPADIGLQRKHRQKVFDKFEKKPLSYHNRIREGFLSLASADPSRYLVLDARESLASLIDKVMLHTQLGLCT</sequence>
<dbReference type="EC" id="2.7.4.9"/>
<dbReference type="EMBL" id="AE001363">
    <property type="protein sequence ID" value="AAD18422.1"/>
    <property type="molecule type" value="Genomic_DNA"/>
</dbReference>
<dbReference type="EMBL" id="AE002161">
    <property type="protein sequence ID" value="AAF38316.1"/>
    <property type="molecule type" value="Genomic_DNA"/>
</dbReference>
<dbReference type="EMBL" id="BA000008">
    <property type="protein sequence ID" value="BAA98483.1"/>
    <property type="molecule type" value="Genomic_DNA"/>
</dbReference>
<dbReference type="EMBL" id="AE009440">
    <property type="protein sequence ID" value="AAP98213.1"/>
    <property type="molecule type" value="Genomic_DNA"/>
</dbReference>
<dbReference type="PIR" id="A86525">
    <property type="entry name" value="A86525"/>
</dbReference>
<dbReference type="PIR" id="F72098">
    <property type="entry name" value="F72098"/>
</dbReference>
<dbReference type="RefSeq" id="NP_224478.1">
    <property type="nucleotide sequence ID" value="NC_000922.1"/>
</dbReference>
<dbReference type="RefSeq" id="WP_010882921.1">
    <property type="nucleotide sequence ID" value="NZ_LN847257.1"/>
</dbReference>
<dbReference type="SMR" id="Q9Z8R5"/>
<dbReference type="STRING" id="406984.CPK_ORF00781"/>
<dbReference type="GeneID" id="45050322"/>
<dbReference type="KEGG" id="cpa:CP_0486"/>
<dbReference type="KEGG" id="cpj:tdk"/>
<dbReference type="KEGG" id="cpn:CPn_0273"/>
<dbReference type="KEGG" id="cpt:CpB0280"/>
<dbReference type="PATRIC" id="fig|115713.3.peg.306"/>
<dbReference type="eggNOG" id="COG0125">
    <property type="taxonomic scope" value="Bacteria"/>
</dbReference>
<dbReference type="HOGENOM" id="CLU_049131_0_2_0"/>
<dbReference type="OMA" id="FLYTADH"/>
<dbReference type="OrthoDB" id="9774907at2"/>
<dbReference type="Proteomes" id="UP000000583">
    <property type="component" value="Chromosome"/>
</dbReference>
<dbReference type="Proteomes" id="UP000000801">
    <property type="component" value="Chromosome"/>
</dbReference>
<dbReference type="GO" id="GO:0005829">
    <property type="term" value="C:cytosol"/>
    <property type="evidence" value="ECO:0007669"/>
    <property type="project" value="TreeGrafter"/>
</dbReference>
<dbReference type="GO" id="GO:0005524">
    <property type="term" value="F:ATP binding"/>
    <property type="evidence" value="ECO:0007669"/>
    <property type="project" value="UniProtKB-UniRule"/>
</dbReference>
<dbReference type="GO" id="GO:0004798">
    <property type="term" value="F:dTMP kinase activity"/>
    <property type="evidence" value="ECO:0007669"/>
    <property type="project" value="UniProtKB-UniRule"/>
</dbReference>
<dbReference type="GO" id="GO:0006233">
    <property type="term" value="P:dTDP biosynthetic process"/>
    <property type="evidence" value="ECO:0007669"/>
    <property type="project" value="InterPro"/>
</dbReference>
<dbReference type="GO" id="GO:0006235">
    <property type="term" value="P:dTTP biosynthetic process"/>
    <property type="evidence" value="ECO:0007669"/>
    <property type="project" value="UniProtKB-UniRule"/>
</dbReference>
<dbReference type="GO" id="GO:0006227">
    <property type="term" value="P:dUDP biosynthetic process"/>
    <property type="evidence" value="ECO:0007669"/>
    <property type="project" value="TreeGrafter"/>
</dbReference>
<dbReference type="CDD" id="cd01672">
    <property type="entry name" value="TMPK"/>
    <property type="match status" value="1"/>
</dbReference>
<dbReference type="FunFam" id="3.40.50.300:FF:000225">
    <property type="entry name" value="Thymidylate kinase"/>
    <property type="match status" value="1"/>
</dbReference>
<dbReference type="Gene3D" id="3.40.50.300">
    <property type="entry name" value="P-loop containing nucleotide triphosphate hydrolases"/>
    <property type="match status" value="1"/>
</dbReference>
<dbReference type="HAMAP" id="MF_00165">
    <property type="entry name" value="Thymidylate_kinase"/>
    <property type="match status" value="1"/>
</dbReference>
<dbReference type="InterPro" id="IPR027417">
    <property type="entry name" value="P-loop_NTPase"/>
</dbReference>
<dbReference type="InterPro" id="IPR039430">
    <property type="entry name" value="Thymidylate_kin-like_dom"/>
</dbReference>
<dbReference type="InterPro" id="IPR018095">
    <property type="entry name" value="Thymidylate_kin_CS"/>
</dbReference>
<dbReference type="InterPro" id="IPR018094">
    <property type="entry name" value="Thymidylate_kinase"/>
</dbReference>
<dbReference type="NCBIfam" id="TIGR00041">
    <property type="entry name" value="DTMP_kinase"/>
    <property type="match status" value="1"/>
</dbReference>
<dbReference type="PANTHER" id="PTHR10344">
    <property type="entry name" value="THYMIDYLATE KINASE"/>
    <property type="match status" value="1"/>
</dbReference>
<dbReference type="PANTHER" id="PTHR10344:SF4">
    <property type="entry name" value="UMP-CMP KINASE 2, MITOCHONDRIAL"/>
    <property type="match status" value="1"/>
</dbReference>
<dbReference type="Pfam" id="PF02223">
    <property type="entry name" value="Thymidylate_kin"/>
    <property type="match status" value="1"/>
</dbReference>
<dbReference type="SUPFAM" id="SSF52540">
    <property type="entry name" value="P-loop containing nucleoside triphosphate hydrolases"/>
    <property type="match status" value="1"/>
</dbReference>
<dbReference type="PROSITE" id="PS01331">
    <property type="entry name" value="THYMIDYLATE_KINASE"/>
    <property type="match status" value="1"/>
</dbReference>
<keyword id="KW-0067">ATP-binding</keyword>
<keyword id="KW-0418">Kinase</keyword>
<keyword id="KW-0545">Nucleotide biosynthesis</keyword>
<keyword id="KW-0547">Nucleotide-binding</keyword>
<keyword id="KW-0808">Transferase</keyword>
<protein>
    <recommendedName>
        <fullName>Thymidylate kinase</fullName>
        <ecNumber>2.7.4.9</ecNumber>
    </recommendedName>
    <alternativeName>
        <fullName>dTMP kinase</fullName>
    </alternativeName>
</protein>
<accession>Q9Z8R5</accession>
<accession>Q9JQ94</accession>